<keyword id="KW-0227">DNA damage</keyword>
<keyword id="KW-0233">DNA recombination</keyword>
<keyword id="KW-0234">DNA repair</keyword>
<keyword id="KW-1185">Reference proteome</keyword>
<accession>A5CF17</accession>
<dbReference type="EMBL" id="AM494475">
    <property type="protein sequence ID" value="CAM80867.1"/>
    <property type="molecule type" value="Genomic_DNA"/>
</dbReference>
<dbReference type="RefSeq" id="WP_011945039.1">
    <property type="nucleotide sequence ID" value="NC_009488.1"/>
</dbReference>
<dbReference type="SMR" id="A5CF17"/>
<dbReference type="KEGG" id="ots:OTBS_1772"/>
<dbReference type="eggNOG" id="COG1381">
    <property type="taxonomic scope" value="Bacteria"/>
</dbReference>
<dbReference type="HOGENOM" id="CLU_086029_0_0_5"/>
<dbReference type="Proteomes" id="UP000001565">
    <property type="component" value="Chromosome"/>
</dbReference>
<dbReference type="GO" id="GO:0043590">
    <property type="term" value="C:bacterial nucleoid"/>
    <property type="evidence" value="ECO:0007669"/>
    <property type="project" value="TreeGrafter"/>
</dbReference>
<dbReference type="GO" id="GO:0006310">
    <property type="term" value="P:DNA recombination"/>
    <property type="evidence" value="ECO:0007669"/>
    <property type="project" value="UniProtKB-UniRule"/>
</dbReference>
<dbReference type="GO" id="GO:0006302">
    <property type="term" value="P:double-strand break repair"/>
    <property type="evidence" value="ECO:0007669"/>
    <property type="project" value="TreeGrafter"/>
</dbReference>
<dbReference type="Gene3D" id="2.40.50.140">
    <property type="entry name" value="Nucleic acid-binding proteins"/>
    <property type="match status" value="1"/>
</dbReference>
<dbReference type="Gene3D" id="1.20.1440.120">
    <property type="entry name" value="Recombination protein O, C-terminal domain"/>
    <property type="match status" value="1"/>
</dbReference>
<dbReference type="HAMAP" id="MF_00201">
    <property type="entry name" value="RecO"/>
    <property type="match status" value="1"/>
</dbReference>
<dbReference type="InterPro" id="IPR037278">
    <property type="entry name" value="ARFGAP/RecO"/>
</dbReference>
<dbReference type="InterPro" id="IPR022572">
    <property type="entry name" value="DNA_rep/recomb_RecO_N"/>
</dbReference>
<dbReference type="InterPro" id="IPR012340">
    <property type="entry name" value="NA-bd_OB-fold"/>
</dbReference>
<dbReference type="InterPro" id="IPR003717">
    <property type="entry name" value="RecO"/>
</dbReference>
<dbReference type="InterPro" id="IPR042242">
    <property type="entry name" value="RecO_C"/>
</dbReference>
<dbReference type="NCBIfam" id="TIGR00613">
    <property type="entry name" value="reco"/>
    <property type="match status" value="1"/>
</dbReference>
<dbReference type="PANTHER" id="PTHR33991">
    <property type="entry name" value="DNA REPAIR PROTEIN RECO"/>
    <property type="match status" value="1"/>
</dbReference>
<dbReference type="PANTHER" id="PTHR33991:SF1">
    <property type="entry name" value="DNA REPAIR PROTEIN RECO"/>
    <property type="match status" value="1"/>
</dbReference>
<dbReference type="Pfam" id="PF02565">
    <property type="entry name" value="RecO_C"/>
    <property type="match status" value="1"/>
</dbReference>
<dbReference type="Pfam" id="PF11967">
    <property type="entry name" value="RecO_N"/>
    <property type="match status" value="1"/>
</dbReference>
<dbReference type="SUPFAM" id="SSF57863">
    <property type="entry name" value="ArfGap/RecO-like zinc finger"/>
    <property type="match status" value="1"/>
</dbReference>
<dbReference type="SUPFAM" id="SSF50249">
    <property type="entry name" value="Nucleic acid-binding proteins"/>
    <property type="match status" value="1"/>
</dbReference>
<gene>
    <name evidence="1" type="primary">recO</name>
    <name type="ordered locus">OTBS_1772</name>
</gene>
<evidence type="ECO:0000255" key="1">
    <source>
        <dbReference type="HAMAP-Rule" id="MF_00201"/>
    </source>
</evidence>
<protein>
    <recommendedName>
        <fullName evidence="1">DNA repair protein RecO</fullName>
    </recommendedName>
    <alternativeName>
        <fullName evidence="1">Recombination protein O</fullName>
    </alternativeName>
</protein>
<sequence>MNFRDKAIILKKRNIKENLAIVTVLTQSYGIYSGIIKDLHSKKNTIIYQIGNIVDFCWSARLDKHLGTINCELVKSYSYLIMSNKRNLFYTHSLIELTLMSFKERELHANLFEKWLGNLESINVGNINIKNYINFELLILKEAGYQLTLDRCGVTNCTQNLIYVSPKSGQAISAAVGEPYKHKLLLLPKFLVHNNCEPEDIYEIQAAFNLTAYFFNKYVLIKKKLPIARELLLKSILAYSF</sequence>
<name>RECO_ORITB</name>
<feature type="chain" id="PRO_1000193402" description="DNA repair protein RecO">
    <location>
        <begin position="1"/>
        <end position="241"/>
    </location>
</feature>
<reference key="1">
    <citation type="journal article" date="2007" name="Proc. Natl. Acad. Sci. U.S.A.">
        <title>The Orientia tsutsugamushi genome reveals massive proliferation of conjugative type IV secretion system and host-cell interaction genes.</title>
        <authorList>
            <person name="Cho N.-H."/>
            <person name="Kim H.-R."/>
            <person name="Lee J.-H."/>
            <person name="Kim S.-Y."/>
            <person name="Kim J."/>
            <person name="Cha S."/>
            <person name="Kim S.-Y."/>
            <person name="Darby A.C."/>
            <person name="Fuxelius H.-H."/>
            <person name="Yin J."/>
            <person name="Kim J.H."/>
            <person name="Kim J."/>
            <person name="Lee S.J."/>
            <person name="Koh Y.-S."/>
            <person name="Jang W.-J."/>
            <person name="Park K.-H."/>
            <person name="Andersson S.G.E."/>
            <person name="Choi M.-S."/>
            <person name="Kim I.-S."/>
        </authorList>
    </citation>
    <scope>NUCLEOTIDE SEQUENCE [LARGE SCALE GENOMIC DNA]</scope>
    <source>
        <strain>Boryong</strain>
    </source>
</reference>
<organism>
    <name type="scientific">Orientia tsutsugamushi (strain Boryong)</name>
    <name type="common">Rickettsia tsutsugamushi</name>
    <dbReference type="NCBI Taxonomy" id="357244"/>
    <lineage>
        <taxon>Bacteria</taxon>
        <taxon>Pseudomonadati</taxon>
        <taxon>Pseudomonadota</taxon>
        <taxon>Alphaproteobacteria</taxon>
        <taxon>Rickettsiales</taxon>
        <taxon>Rickettsiaceae</taxon>
        <taxon>Rickettsieae</taxon>
        <taxon>Orientia</taxon>
    </lineage>
</organism>
<comment type="function">
    <text evidence="1">Involved in DNA repair and RecF pathway recombination.</text>
</comment>
<comment type="similarity">
    <text evidence="1">Belongs to the RecO family.</text>
</comment>
<proteinExistence type="inferred from homology"/>